<keyword id="KW-0012">Acyltransferase</keyword>
<keyword id="KW-0963">Cytoplasm</keyword>
<keyword id="KW-0441">Lipid A biosynthesis</keyword>
<keyword id="KW-0444">Lipid biosynthesis</keyword>
<keyword id="KW-0443">Lipid metabolism</keyword>
<keyword id="KW-0677">Repeat</keyword>
<keyword id="KW-0808">Transferase</keyword>
<evidence type="ECO:0000255" key="1">
    <source>
        <dbReference type="HAMAP-Rule" id="MF_00387"/>
    </source>
</evidence>
<organism>
    <name type="scientific">Escherichia coli O81 (strain ED1a)</name>
    <dbReference type="NCBI Taxonomy" id="585397"/>
    <lineage>
        <taxon>Bacteria</taxon>
        <taxon>Pseudomonadati</taxon>
        <taxon>Pseudomonadota</taxon>
        <taxon>Gammaproteobacteria</taxon>
        <taxon>Enterobacterales</taxon>
        <taxon>Enterobacteriaceae</taxon>
        <taxon>Escherichia</taxon>
    </lineage>
</organism>
<protein>
    <recommendedName>
        <fullName evidence="1">Acyl-[acyl-carrier-protein]--UDP-N-acetylglucosamine O-acyltransferase</fullName>
        <shortName evidence="1">UDP-N-acetylglucosamine acyltransferase</shortName>
        <ecNumber evidence="1">2.3.1.129</ecNumber>
    </recommendedName>
</protein>
<sequence>MIDKSAFVHPTAIVEEGASIGANAHIGPFCIVGPHVEIGEGTVLKSHVVVNGHTKIGRDNEIYQFASIGEVNQDLKYAGEPTRVEIGDRNRIRESVTIHRGTVQGGGLTKVGSDNLLMINAHIAHDCTVGNRCILANNATLAGHVSVDDFAIIGGMTAVHQFCIIGAHVMVGGCSGVAQDVPPYVIAQGNHATPFGVNIEGLKRRGFSREAITAIRNAYKLIYRSGKTLDEVKPEIAELAETYPEVKAFTDFFARSTRGLIR</sequence>
<name>LPXA_ECO81</name>
<comment type="function">
    <text evidence="1">Involved in the biosynthesis of lipid A, a phosphorylated glycolipid that anchors the lipopolysaccharide to the outer membrane of the cell.</text>
</comment>
<comment type="catalytic activity">
    <reaction evidence="1">
        <text>a (3R)-hydroxyacyl-[ACP] + UDP-N-acetyl-alpha-D-glucosamine = a UDP-3-O-[(3R)-3-hydroxyacyl]-N-acetyl-alpha-D-glucosamine + holo-[ACP]</text>
        <dbReference type="Rhea" id="RHEA:67812"/>
        <dbReference type="Rhea" id="RHEA-COMP:9685"/>
        <dbReference type="Rhea" id="RHEA-COMP:9945"/>
        <dbReference type="ChEBI" id="CHEBI:57705"/>
        <dbReference type="ChEBI" id="CHEBI:64479"/>
        <dbReference type="ChEBI" id="CHEBI:78827"/>
        <dbReference type="ChEBI" id="CHEBI:173225"/>
        <dbReference type="EC" id="2.3.1.129"/>
    </reaction>
</comment>
<comment type="pathway">
    <text evidence="1">Glycolipid biosynthesis; lipid IV(A) biosynthesis; lipid IV(A) from (3R)-3-hydroxytetradecanoyl-[acyl-carrier-protein] and UDP-N-acetyl-alpha-D-glucosamine: step 1/6.</text>
</comment>
<comment type="subunit">
    <text evidence="1">Homotrimer.</text>
</comment>
<comment type="subcellular location">
    <subcellularLocation>
        <location evidence="1">Cytoplasm</location>
    </subcellularLocation>
</comment>
<comment type="similarity">
    <text evidence="1">Belongs to the transferase hexapeptide repeat family. LpxA subfamily.</text>
</comment>
<dbReference type="EC" id="2.3.1.129" evidence="1"/>
<dbReference type="EMBL" id="CU928162">
    <property type="protein sequence ID" value="CAR06406.1"/>
    <property type="molecule type" value="Genomic_DNA"/>
</dbReference>
<dbReference type="RefSeq" id="WP_000565966.1">
    <property type="nucleotide sequence ID" value="NC_011745.1"/>
</dbReference>
<dbReference type="SMR" id="B7MP41"/>
<dbReference type="GeneID" id="93777244"/>
<dbReference type="KEGG" id="ecq:ECED1_0187"/>
<dbReference type="HOGENOM" id="CLU_061249_0_0_6"/>
<dbReference type="UniPathway" id="UPA00359">
    <property type="reaction ID" value="UER00477"/>
</dbReference>
<dbReference type="Proteomes" id="UP000000748">
    <property type="component" value="Chromosome"/>
</dbReference>
<dbReference type="GO" id="GO:0005737">
    <property type="term" value="C:cytoplasm"/>
    <property type="evidence" value="ECO:0007669"/>
    <property type="project" value="UniProtKB-SubCell"/>
</dbReference>
<dbReference type="GO" id="GO:0016020">
    <property type="term" value="C:membrane"/>
    <property type="evidence" value="ECO:0007669"/>
    <property type="project" value="GOC"/>
</dbReference>
<dbReference type="GO" id="GO:0008780">
    <property type="term" value="F:acyl-[acyl-carrier-protein]-UDP-N-acetylglucosamine O-acyltransferase activity"/>
    <property type="evidence" value="ECO:0007669"/>
    <property type="project" value="UniProtKB-UniRule"/>
</dbReference>
<dbReference type="GO" id="GO:0009245">
    <property type="term" value="P:lipid A biosynthetic process"/>
    <property type="evidence" value="ECO:0007669"/>
    <property type="project" value="UniProtKB-UniRule"/>
</dbReference>
<dbReference type="CDD" id="cd03351">
    <property type="entry name" value="LbH_UDP-GlcNAc_AT"/>
    <property type="match status" value="1"/>
</dbReference>
<dbReference type="FunFam" id="1.20.1180.10:FF:000001">
    <property type="entry name" value="Acyl-[acyl-carrier-protein]--UDP-N-acetylglucosamine O-acyltransferase"/>
    <property type="match status" value="1"/>
</dbReference>
<dbReference type="FunFam" id="2.160.10.10:FF:000003">
    <property type="entry name" value="Acyl-[acyl-carrier-protein]--UDP-N-acetylglucosamine O-acyltransferase"/>
    <property type="match status" value="1"/>
</dbReference>
<dbReference type="Gene3D" id="2.160.10.10">
    <property type="entry name" value="Hexapeptide repeat proteins"/>
    <property type="match status" value="1"/>
</dbReference>
<dbReference type="Gene3D" id="1.20.1180.10">
    <property type="entry name" value="Udp N-acetylglucosamine O-acyltransferase, C-terminal domain"/>
    <property type="match status" value="1"/>
</dbReference>
<dbReference type="HAMAP" id="MF_00387">
    <property type="entry name" value="LpxA"/>
    <property type="match status" value="1"/>
</dbReference>
<dbReference type="InterPro" id="IPR029098">
    <property type="entry name" value="Acetyltransf_C"/>
</dbReference>
<dbReference type="InterPro" id="IPR037157">
    <property type="entry name" value="Acetyltransf_C_sf"/>
</dbReference>
<dbReference type="InterPro" id="IPR001451">
    <property type="entry name" value="Hexapep"/>
</dbReference>
<dbReference type="InterPro" id="IPR018357">
    <property type="entry name" value="Hexapep_transf_CS"/>
</dbReference>
<dbReference type="InterPro" id="IPR010137">
    <property type="entry name" value="Lipid_A_LpxA"/>
</dbReference>
<dbReference type="InterPro" id="IPR011004">
    <property type="entry name" value="Trimer_LpxA-like_sf"/>
</dbReference>
<dbReference type="NCBIfam" id="TIGR01852">
    <property type="entry name" value="lipid_A_lpxA"/>
    <property type="match status" value="1"/>
</dbReference>
<dbReference type="NCBIfam" id="NF003657">
    <property type="entry name" value="PRK05289.1"/>
    <property type="match status" value="1"/>
</dbReference>
<dbReference type="PANTHER" id="PTHR43480">
    <property type="entry name" value="ACYL-[ACYL-CARRIER-PROTEIN]--UDP-N-ACETYLGLUCOSAMINE O-ACYLTRANSFERASE"/>
    <property type="match status" value="1"/>
</dbReference>
<dbReference type="PANTHER" id="PTHR43480:SF1">
    <property type="entry name" value="ACYL-[ACYL-CARRIER-PROTEIN]--UDP-N-ACETYLGLUCOSAMINE O-ACYLTRANSFERASE, MITOCHONDRIAL-RELATED"/>
    <property type="match status" value="1"/>
</dbReference>
<dbReference type="Pfam" id="PF13720">
    <property type="entry name" value="Acetyltransf_11"/>
    <property type="match status" value="1"/>
</dbReference>
<dbReference type="Pfam" id="PF00132">
    <property type="entry name" value="Hexapep"/>
    <property type="match status" value="2"/>
</dbReference>
<dbReference type="PIRSF" id="PIRSF000456">
    <property type="entry name" value="UDP-GlcNAc_acltr"/>
    <property type="match status" value="1"/>
</dbReference>
<dbReference type="SUPFAM" id="SSF51161">
    <property type="entry name" value="Trimeric LpxA-like enzymes"/>
    <property type="match status" value="1"/>
</dbReference>
<dbReference type="PROSITE" id="PS00101">
    <property type="entry name" value="HEXAPEP_TRANSFERASES"/>
    <property type="match status" value="2"/>
</dbReference>
<proteinExistence type="inferred from homology"/>
<accession>B7MP41</accession>
<reference key="1">
    <citation type="journal article" date="2009" name="PLoS Genet.">
        <title>Organised genome dynamics in the Escherichia coli species results in highly diverse adaptive paths.</title>
        <authorList>
            <person name="Touchon M."/>
            <person name="Hoede C."/>
            <person name="Tenaillon O."/>
            <person name="Barbe V."/>
            <person name="Baeriswyl S."/>
            <person name="Bidet P."/>
            <person name="Bingen E."/>
            <person name="Bonacorsi S."/>
            <person name="Bouchier C."/>
            <person name="Bouvet O."/>
            <person name="Calteau A."/>
            <person name="Chiapello H."/>
            <person name="Clermont O."/>
            <person name="Cruveiller S."/>
            <person name="Danchin A."/>
            <person name="Diard M."/>
            <person name="Dossat C."/>
            <person name="Karoui M.E."/>
            <person name="Frapy E."/>
            <person name="Garry L."/>
            <person name="Ghigo J.M."/>
            <person name="Gilles A.M."/>
            <person name="Johnson J."/>
            <person name="Le Bouguenec C."/>
            <person name="Lescat M."/>
            <person name="Mangenot S."/>
            <person name="Martinez-Jehanne V."/>
            <person name="Matic I."/>
            <person name="Nassif X."/>
            <person name="Oztas S."/>
            <person name="Petit M.A."/>
            <person name="Pichon C."/>
            <person name="Rouy Z."/>
            <person name="Ruf C.S."/>
            <person name="Schneider D."/>
            <person name="Tourret J."/>
            <person name="Vacherie B."/>
            <person name="Vallenet D."/>
            <person name="Medigue C."/>
            <person name="Rocha E.P.C."/>
            <person name="Denamur E."/>
        </authorList>
    </citation>
    <scope>NUCLEOTIDE SEQUENCE [LARGE SCALE GENOMIC DNA]</scope>
    <source>
        <strain>ED1a</strain>
    </source>
</reference>
<gene>
    <name evidence="1" type="primary">lpxA</name>
    <name type="ordered locus">ECED1_0187</name>
</gene>
<feature type="chain" id="PRO_1000134385" description="Acyl-[acyl-carrier-protein]--UDP-N-acetylglucosamine O-acyltransferase">
    <location>
        <begin position="1"/>
        <end position="262"/>
    </location>
</feature>